<sequence>MLEAECDEVELTSRDVGDYLMFKTRITDNFTGDLTLNINTSNLIKFKTCSFFICYGDDKDRYELGWTSTSTSRSIFQHYKDGKYIRDFRIQDPFPILSGSTFPVVISKIIANRVAFRMSRRLNNVIVDKLKNNIIEFLFVVYLDVDTGKIKPNTILKNLDLSSLFIVFSNNGNNKINLPYEIELQTKDRGIVYTKMGNPISYNLFNKFEDLLDIETKGVDKPEDKPKPVFDDKGKQPTDTVPPVDNGKPDISKPGEKQGDIDIASKFNNIVMAKLKAQSSSDPLTKKQCDQLMLSLIKWFEKFGITKDNARLLIFQFGISFSTSKENLNNITNNIVVENDKGGFVKILKIDYLNKLYGSIPESHTHNLERVLLRHYAQEILILLRSKVLEWPRKLARNKGIFEQYAYMACDFFDTAELELTEAETTALTTVKSWTMNHYKKKRQIVNSSQLE</sequence>
<reference key="1">
    <citation type="journal article" date="1995" name="Virology">
        <title>Genome structure and phylogenetic analysis of lettuce infectious yellows virus, a whitefly-transmitted, bipartite closterovirus.</title>
        <authorList>
            <person name="Klaassen V.A."/>
            <person name="Boeshore M.L."/>
            <person name="Koonin E.V."/>
            <person name="Tian T."/>
            <person name="Falk B.W."/>
        </authorList>
    </citation>
    <scope>NUCLEOTIDE SEQUENCE [GENOMIC RNA]</scope>
</reference>
<reference key="2">
    <citation type="journal article" date="1994" name="J. Gen. Virol.">
        <title>Partial characterization of the lettuce infectious yellows virus genomic RNAs, identification of the coat protein gene and comparison of its amino acid sequence with those of other filamentous RNA plant viruses.</title>
        <authorList>
            <person name="Klaassen V.A."/>
            <person name="Boeshore M."/>
            <person name="Dolja V.V."/>
            <person name="Falk B.W."/>
        </authorList>
    </citation>
    <scope>NUCLEOTIDE SEQUENCE [GENOMIC RNA]</scope>
</reference>
<reference key="3">
    <citation type="journal article" date="1999" name="J. Gen. Virol.">
        <title>Lettuce infectious yellows virus: in vitro acquisition analysis using partially purified virions and the whitefly Bemisia tabaci.</title>
        <authorList>
            <person name="Tian T."/>
            <person name="Rubio L."/>
            <person name="Yeh H.H."/>
            <person name="Crawford B."/>
            <person name="Falk B.W."/>
        </authorList>
    </citation>
    <scope>SUBCELLULAR LOCATION</scope>
</reference>
<protein>
    <recommendedName>
        <fullName>Minor capsid protein</fullName>
    </recommendedName>
    <alternativeName>
        <fullName>CPm</fullName>
    </alternativeName>
</protein>
<name>CPM_LIYV9</name>
<feature type="chain" id="PRO_0000402515" description="Minor capsid protein">
    <location>
        <begin position="1"/>
        <end position="452"/>
    </location>
</feature>
<feature type="region of interest" description="Disordered" evidence="2">
    <location>
        <begin position="219"/>
        <end position="258"/>
    </location>
</feature>
<feature type="compositionally biased region" description="Basic and acidic residues" evidence="2">
    <location>
        <begin position="219"/>
        <end position="236"/>
    </location>
</feature>
<feature type="compositionally biased region" description="Basic and acidic residues" evidence="2">
    <location>
        <begin position="247"/>
        <end position="258"/>
    </location>
</feature>
<evidence type="ECO:0000250" key="1"/>
<evidence type="ECO:0000256" key="2">
    <source>
        <dbReference type="SAM" id="MobiDB-lite"/>
    </source>
</evidence>
<evidence type="ECO:0000269" key="3">
    <source>
    </source>
</evidence>
<evidence type="ECO:0000305" key="4"/>
<accession>Q83050</accession>
<dbReference type="EMBL" id="U15441">
    <property type="protein sequence ID" value="AAA61803.1"/>
    <property type="molecule type" value="Genomic_RNA"/>
</dbReference>
<dbReference type="RefSeq" id="NP_619698.1">
    <property type="nucleotide sequence ID" value="NC_003618.1"/>
</dbReference>
<dbReference type="GeneID" id="991078"/>
<dbReference type="KEGG" id="vg:991078"/>
<dbReference type="Proteomes" id="UP000001099">
    <property type="component" value="Genome"/>
</dbReference>
<dbReference type="GO" id="GO:0019028">
    <property type="term" value="C:viral capsid"/>
    <property type="evidence" value="ECO:0007669"/>
    <property type="project" value="UniProtKB-KW"/>
</dbReference>
<dbReference type="InterPro" id="IPR002679">
    <property type="entry name" value="Closter_coat"/>
</dbReference>
<dbReference type="Pfam" id="PF01785">
    <property type="entry name" value="Closter_coat"/>
    <property type="match status" value="1"/>
</dbReference>
<organism>
    <name type="scientific">Lettuce infectious yellows virus (isolate United States/92)</name>
    <name type="common">LIYV</name>
    <dbReference type="NCBI Taxonomy" id="651355"/>
    <lineage>
        <taxon>Viruses</taxon>
        <taxon>Riboviria</taxon>
        <taxon>Orthornavirae</taxon>
        <taxon>Kitrinoviricota</taxon>
        <taxon>Alsuviricetes</taxon>
        <taxon>Martellivirales</taxon>
        <taxon>Closteroviridae</taxon>
        <taxon>Crinivirus</taxon>
        <taxon>Lettuce infectious yellows virus</taxon>
    </lineage>
</organism>
<organismHost>
    <name type="scientific">Beta vulgaris</name>
    <name type="common">Sugar beet</name>
    <dbReference type="NCBI Taxonomy" id="161934"/>
</organismHost>
<organismHost>
    <name type="scientific">Citrullus lanatus</name>
    <name type="common">Watermelon</name>
    <name type="synonym">Citrullus vulgaris</name>
    <dbReference type="NCBI Taxonomy" id="3654"/>
</organismHost>
<organismHost>
    <name type="scientific">Cucumis melo</name>
    <name type="common">Muskmelon</name>
    <dbReference type="NCBI Taxonomy" id="3656"/>
</organismHost>
<organismHost>
    <name type="scientific">Cucurbita maxima</name>
    <name type="common">Pumpkin</name>
    <name type="synonym">Winter squash</name>
    <dbReference type="NCBI Taxonomy" id="3661"/>
</organismHost>
<organismHost>
    <name type="scientific">Cucurbita moschata</name>
    <name type="common">Winter crookneck squash</name>
    <name type="synonym">Cucurbita pepo var. moschata</name>
    <dbReference type="NCBI Taxonomy" id="3662"/>
</organismHost>
<organismHost>
    <name type="scientific">Cucurbita pepo</name>
    <name type="common">Vegetable marrow</name>
    <name type="synonym">Summer squash</name>
    <dbReference type="NCBI Taxonomy" id="3663"/>
</organismHost>
<organismHost>
    <name type="scientific">Daucus carota</name>
    <name type="common">Wild carrot</name>
    <dbReference type="NCBI Taxonomy" id="4039"/>
</organismHost>
<organismHost>
    <name type="scientific">Lactuca sativa</name>
    <name type="common">Garden lettuce</name>
    <dbReference type="NCBI Taxonomy" id="4236"/>
</organismHost>
<proteinExistence type="inferred from homology"/>
<keyword id="KW-0167">Capsid protein</keyword>
<keyword id="KW-1185">Reference proteome</keyword>
<keyword id="KW-0946">Virion</keyword>
<comment type="function">
    <text evidence="4">Minor capsid protein that encapsidates the 5'-terminal portion of the viral genome.</text>
</comment>
<comment type="subcellular location">
    <subcellularLocation>
        <location evidence="3">Virion</location>
    </subcellularLocation>
    <text evidence="1">Integral virion tail component.</text>
</comment>
<comment type="similarity">
    <text evidence="4">Belongs to the closteroviridae minor capsid protein family.</text>
</comment>